<gene>
    <name evidence="1" type="primary">rpmA</name>
    <name type="ordered locus">MAP_2265c</name>
</gene>
<evidence type="ECO:0000255" key="1">
    <source>
        <dbReference type="HAMAP-Rule" id="MF_00539"/>
    </source>
</evidence>
<evidence type="ECO:0000256" key="2">
    <source>
        <dbReference type="SAM" id="MobiDB-lite"/>
    </source>
</evidence>
<evidence type="ECO:0000305" key="3"/>
<keyword id="KW-1185">Reference proteome</keyword>
<keyword id="KW-0687">Ribonucleoprotein</keyword>
<keyword id="KW-0689">Ribosomal protein</keyword>
<feature type="chain" id="PRO_0000181126" description="Large ribosomal subunit protein bL27">
    <location>
        <begin position="1"/>
        <end position="88"/>
    </location>
</feature>
<feature type="region of interest" description="Disordered" evidence="2">
    <location>
        <begin position="1"/>
        <end position="21"/>
    </location>
</feature>
<name>RL27_MYCPA</name>
<accession>Q73XP4</accession>
<organism>
    <name type="scientific">Mycolicibacterium paratuberculosis (strain ATCC BAA-968 / K-10)</name>
    <name type="common">Mycobacterium paratuberculosis</name>
    <dbReference type="NCBI Taxonomy" id="262316"/>
    <lineage>
        <taxon>Bacteria</taxon>
        <taxon>Bacillati</taxon>
        <taxon>Actinomycetota</taxon>
        <taxon>Actinomycetes</taxon>
        <taxon>Mycobacteriales</taxon>
        <taxon>Mycobacteriaceae</taxon>
        <taxon>Mycobacterium</taxon>
        <taxon>Mycobacterium avium complex (MAC)</taxon>
    </lineage>
</organism>
<reference key="1">
    <citation type="journal article" date="2005" name="Proc. Natl. Acad. Sci. U.S.A.">
        <title>The complete genome sequence of Mycobacterium avium subspecies paratuberculosis.</title>
        <authorList>
            <person name="Li L."/>
            <person name="Bannantine J.P."/>
            <person name="Zhang Q."/>
            <person name="Amonsin A."/>
            <person name="May B.J."/>
            <person name="Alt D."/>
            <person name="Banerji N."/>
            <person name="Kanjilal S."/>
            <person name="Kapur V."/>
        </authorList>
    </citation>
    <scope>NUCLEOTIDE SEQUENCE [LARGE SCALE GENOMIC DNA]</scope>
    <source>
        <strain>ATCC BAA-968 / K-10</strain>
    </source>
</reference>
<dbReference type="EMBL" id="AE016958">
    <property type="protein sequence ID" value="AAS04582.1"/>
    <property type="molecule type" value="Genomic_DNA"/>
</dbReference>
<dbReference type="RefSeq" id="WP_003875863.1">
    <property type="nucleotide sequence ID" value="NZ_CP106873.1"/>
</dbReference>
<dbReference type="SMR" id="Q73XP4"/>
<dbReference type="STRING" id="262316.MAP_2265c"/>
<dbReference type="GeneID" id="75269505"/>
<dbReference type="KEGG" id="mpa:MAP_2265c"/>
<dbReference type="eggNOG" id="COG0211">
    <property type="taxonomic scope" value="Bacteria"/>
</dbReference>
<dbReference type="HOGENOM" id="CLU_095424_4_0_11"/>
<dbReference type="Proteomes" id="UP000000580">
    <property type="component" value="Chromosome"/>
</dbReference>
<dbReference type="GO" id="GO:0022625">
    <property type="term" value="C:cytosolic large ribosomal subunit"/>
    <property type="evidence" value="ECO:0007669"/>
    <property type="project" value="TreeGrafter"/>
</dbReference>
<dbReference type="GO" id="GO:0003735">
    <property type="term" value="F:structural constituent of ribosome"/>
    <property type="evidence" value="ECO:0007669"/>
    <property type="project" value="InterPro"/>
</dbReference>
<dbReference type="GO" id="GO:0006412">
    <property type="term" value="P:translation"/>
    <property type="evidence" value="ECO:0007669"/>
    <property type="project" value="UniProtKB-UniRule"/>
</dbReference>
<dbReference type="FunFam" id="2.40.50.100:FF:000020">
    <property type="entry name" value="50S ribosomal protein L27"/>
    <property type="match status" value="1"/>
</dbReference>
<dbReference type="Gene3D" id="2.40.50.100">
    <property type="match status" value="1"/>
</dbReference>
<dbReference type="HAMAP" id="MF_00539">
    <property type="entry name" value="Ribosomal_bL27"/>
    <property type="match status" value="1"/>
</dbReference>
<dbReference type="InterPro" id="IPR001684">
    <property type="entry name" value="Ribosomal_bL27"/>
</dbReference>
<dbReference type="InterPro" id="IPR018261">
    <property type="entry name" value="Ribosomal_bL27_CS"/>
</dbReference>
<dbReference type="NCBIfam" id="TIGR00062">
    <property type="entry name" value="L27"/>
    <property type="match status" value="1"/>
</dbReference>
<dbReference type="PANTHER" id="PTHR15893:SF0">
    <property type="entry name" value="LARGE RIBOSOMAL SUBUNIT PROTEIN BL27M"/>
    <property type="match status" value="1"/>
</dbReference>
<dbReference type="PANTHER" id="PTHR15893">
    <property type="entry name" value="RIBOSOMAL PROTEIN L27"/>
    <property type="match status" value="1"/>
</dbReference>
<dbReference type="Pfam" id="PF01016">
    <property type="entry name" value="Ribosomal_L27"/>
    <property type="match status" value="1"/>
</dbReference>
<dbReference type="PRINTS" id="PR00063">
    <property type="entry name" value="RIBOSOMALL27"/>
</dbReference>
<dbReference type="SUPFAM" id="SSF110324">
    <property type="entry name" value="Ribosomal L27 protein-like"/>
    <property type="match status" value="1"/>
</dbReference>
<dbReference type="PROSITE" id="PS00831">
    <property type="entry name" value="RIBOSOMAL_L27"/>
    <property type="match status" value="1"/>
</dbReference>
<sequence length="88" mass="9132">MAHKKGASSSRNGRDSAAQRLGVKRFGGQIVKAGEIIVRQRGTKFHPGTGVGRGGDDTLFAKQAGAVEFGIKRGRKTVNIVAAGQAAD</sequence>
<proteinExistence type="inferred from homology"/>
<comment type="similarity">
    <text evidence="1">Belongs to the bacterial ribosomal protein bL27 family.</text>
</comment>
<protein>
    <recommendedName>
        <fullName evidence="1">Large ribosomal subunit protein bL27</fullName>
    </recommendedName>
    <alternativeName>
        <fullName evidence="3">50S ribosomal protein L27</fullName>
    </alternativeName>
</protein>